<organism>
    <name type="scientific">Thermosynechococcus vestitus (strain NIES-2133 / IAM M-273 / BP-1)</name>
    <dbReference type="NCBI Taxonomy" id="197221"/>
    <lineage>
        <taxon>Bacteria</taxon>
        <taxon>Bacillati</taxon>
        <taxon>Cyanobacteriota</taxon>
        <taxon>Cyanophyceae</taxon>
        <taxon>Acaryochloridales</taxon>
        <taxon>Thermosynechococcaceae</taxon>
        <taxon>Thermosynechococcus</taxon>
    </lineage>
</organism>
<name>RIMM_THEVB</name>
<sequence length="183" mass="20047">MVTPFPEVSEWLCIGQIVGAHGLRGEVKVKPFSDFPERFTVPGCRWLRSPRQPQPYAVTLLRGRFLPRAEQFVVTFAEISDRTAAEALKGAEILVPASDRPPLAANEYHLMDLIGLAVYHQGERVGEVVGLVNAGNDLLEVQLLDPAPKAPQSVYIPFVPAIVPVVDLAARRIEIDPPLGLLP</sequence>
<comment type="function">
    <text evidence="1">An accessory protein needed during the final step in the assembly of 30S ribosomal subunit, possibly for assembly of the head region. Essential for efficient processing of 16S rRNA. May be needed both before and after RbfA during the maturation of 16S rRNA. It has affinity for free ribosomal 30S subunits but not for 70S ribosomes.</text>
</comment>
<comment type="subunit">
    <text evidence="1">Binds ribosomal protein uS19.</text>
</comment>
<comment type="subcellular location">
    <subcellularLocation>
        <location evidence="1">Cytoplasm</location>
    </subcellularLocation>
</comment>
<comment type="domain">
    <text evidence="1">The PRC barrel domain binds ribosomal protein uS19.</text>
</comment>
<comment type="similarity">
    <text evidence="1">Belongs to the RimM family.</text>
</comment>
<gene>
    <name evidence="1" type="primary">rimM</name>
    <name type="ordered locus">tlr1065</name>
</gene>
<feature type="chain" id="PRO_0000163374" description="Ribosome maturation factor RimM">
    <location>
        <begin position="1"/>
        <end position="183"/>
    </location>
</feature>
<feature type="domain" description="PRC barrel" evidence="1">
    <location>
        <begin position="105"/>
        <end position="181"/>
    </location>
</feature>
<keyword id="KW-0143">Chaperone</keyword>
<keyword id="KW-0963">Cytoplasm</keyword>
<keyword id="KW-1185">Reference proteome</keyword>
<keyword id="KW-0690">Ribosome biogenesis</keyword>
<keyword id="KW-0698">rRNA processing</keyword>
<accession>Q8DK05</accession>
<proteinExistence type="inferred from homology"/>
<protein>
    <recommendedName>
        <fullName evidence="1">Ribosome maturation factor RimM</fullName>
    </recommendedName>
</protein>
<dbReference type="EMBL" id="BA000039">
    <property type="protein sequence ID" value="BAC08618.1"/>
    <property type="molecule type" value="Genomic_DNA"/>
</dbReference>
<dbReference type="RefSeq" id="NP_681856.1">
    <property type="nucleotide sequence ID" value="NC_004113.1"/>
</dbReference>
<dbReference type="RefSeq" id="WP_011056908.1">
    <property type="nucleotide sequence ID" value="NC_004113.1"/>
</dbReference>
<dbReference type="SMR" id="Q8DK05"/>
<dbReference type="STRING" id="197221.gene:10747659"/>
<dbReference type="EnsemblBacteria" id="BAC08618">
    <property type="protein sequence ID" value="BAC08618"/>
    <property type="gene ID" value="BAC08618"/>
</dbReference>
<dbReference type="KEGG" id="tel:tlr1065"/>
<dbReference type="PATRIC" id="fig|197221.4.peg.1119"/>
<dbReference type="eggNOG" id="COG0806">
    <property type="taxonomic scope" value="Bacteria"/>
</dbReference>
<dbReference type="Proteomes" id="UP000000440">
    <property type="component" value="Chromosome"/>
</dbReference>
<dbReference type="GO" id="GO:0005737">
    <property type="term" value="C:cytoplasm"/>
    <property type="evidence" value="ECO:0007669"/>
    <property type="project" value="UniProtKB-SubCell"/>
</dbReference>
<dbReference type="GO" id="GO:0005840">
    <property type="term" value="C:ribosome"/>
    <property type="evidence" value="ECO:0007669"/>
    <property type="project" value="InterPro"/>
</dbReference>
<dbReference type="GO" id="GO:0043022">
    <property type="term" value="F:ribosome binding"/>
    <property type="evidence" value="ECO:0007669"/>
    <property type="project" value="InterPro"/>
</dbReference>
<dbReference type="GO" id="GO:0042274">
    <property type="term" value="P:ribosomal small subunit biogenesis"/>
    <property type="evidence" value="ECO:0007669"/>
    <property type="project" value="UniProtKB-UniRule"/>
</dbReference>
<dbReference type="GO" id="GO:0006364">
    <property type="term" value="P:rRNA processing"/>
    <property type="evidence" value="ECO:0007669"/>
    <property type="project" value="UniProtKB-UniRule"/>
</dbReference>
<dbReference type="Gene3D" id="2.30.30.240">
    <property type="entry name" value="PRC-barrel domain"/>
    <property type="match status" value="1"/>
</dbReference>
<dbReference type="Gene3D" id="2.40.30.60">
    <property type="entry name" value="RimM"/>
    <property type="match status" value="1"/>
</dbReference>
<dbReference type="HAMAP" id="MF_00014">
    <property type="entry name" value="Ribosome_mat_RimM"/>
    <property type="match status" value="1"/>
</dbReference>
<dbReference type="InterPro" id="IPR011033">
    <property type="entry name" value="PRC_barrel-like_sf"/>
</dbReference>
<dbReference type="InterPro" id="IPR056792">
    <property type="entry name" value="PRC_RimM"/>
</dbReference>
<dbReference type="InterPro" id="IPR011961">
    <property type="entry name" value="RimM"/>
</dbReference>
<dbReference type="InterPro" id="IPR002676">
    <property type="entry name" value="RimM_N"/>
</dbReference>
<dbReference type="InterPro" id="IPR036976">
    <property type="entry name" value="RimM_N_sf"/>
</dbReference>
<dbReference type="InterPro" id="IPR009000">
    <property type="entry name" value="Transl_B-barrel_sf"/>
</dbReference>
<dbReference type="NCBIfam" id="TIGR02273">
    <property type="entry name" value="16S_RimM"/>
    <property type="match status" value="1"/>
</dbReference>
<dbReference type="PANTHER" id="PTHR33692">
    <property type="entry name" value="RIBOSOME MATURATION FACTOR RIMM"/>
    <property type="match status" value="1"/>
</dbReference>
<dbReference type="PANTHER" id="PTHR33692:SF1">
    <property type="entry name" value="RIBOSOME MATURATION FACTOR RIMM"/>
    <property type="match status" value="1"/>
</dbReference>
<dbReference type="Pfam" id="PF24986">
    <property type="entry name" value="PRC_RimM"/>
    <property type="match status" value="1"/>
</dbReference>
<dbReference type="Pfam" id="PF01782">
    <property type="entry name" value="RimM"/>
    <property type="match status" value="1"/>
</dbReference>
<dbReference type="SUPFAM" id="SSF50346">
    <property type="entry name" value="PRC-barrel domain"/>
    <property type="match status" value="1"/>
</dbReference>
<dbReference type="SUPFAM" id="SSF50447">
    <property type="entry name" value="Translation proteins"/>
    <property type="match status" value="1"/>
</dbReference>
<evidence type="ECO:0000255" key="1">
    <source>
        <dbReference type="HAMAP-Rule" id="MF_00014"/>
    </source>
</evidence>
<reference key="1">
    <citation type="journal article" date="2002" name="DNA Res.">
        <title>Complete genome structure of the thermophilic cyanobacterium Thermosynechococcus elongatus BP-1.</title>
        <authorList>
            <person name="Nakamura Y."/>
            <person name="Kaneko T."/>
            <person name="Sato S."/>
            <person name="Ikeuchi M."/>
            <person name="Katoh H."/>
            <person name="Sasamoto S."/>
            <person name="Watanabe A."/>
            <person name="Iriguchi M."/>
            <person name="Kawashima K."/>
            <person name="Kimura T."/>
            <person name="Kishida Y."/>
            <person name="Kiyokawa C."/>
            <person name="Kohara M."/>
            <person name="Matsumoto M."/>
            <person name="Matsuno A."/>
            <person name="Nakazaki N."/>
            <person name="Shimpo S."/>
            <person name="Sugimoto M."/>
            <person name="Takeuchi C."/>
            <person name="Yamada M."/>
            <person name="Tabata S."/>
        </authorList>
    </citation>
    <scope>NUCLEOTIDE SEQUENCE [LARGE SCALE GENOMIC DNA]</scope>
    <source>
        <strain>NIES-2133 / IAM M-273 / BP-1</strain>
    </source>
</reference>